<dbReference type="EC" id="3.2.1.80"/>
<dbReference type="EMBL" id="HM587130">
    <property type="protein sequence ID" value="ADM21204.1"/>
    <property type="molecule type" value="Genomic_DNA"/>
</dbReference>
<dbReference type="SMR" id="E1ABX2"/>
<dbReference type="CAZy" id="GH32">
    <property type="family name" value="Glycoside Hydrolase Family 32"/>
</dbReference>
<dbReference type="GlyCosmos" id="E1ABX2">
    <property type="glycosylation" value="8 sites, No reported glycans"/>
</dbReference>
<dbReference type="GO" id="GO:0005737">
    <property type="term" value="C:cytoplasm"/>
    <property type="evidence" value="ECO:0007669"/>
    <property type="project" value="TreeGrafter"/>
</dbReference>
<dbReference type="GO" id="GO:0005576">
    <property type="term" value="C:extracellular region"/>
    <property type="evidence" value="ECO:0007669"/>
    <property type="project" value="UniProtKB-SubCell"/>
</dbReference>
<dbReference type="GO" id="GO:0051669">
    <property type="term" value="F:fructan beta-fructosidase activity"/>
    <property type="evidence" value="ECO:0007669"/>
    <property type="project" value="UniProtKB-EC"/>
</dbReference>
<dbReference type="GO" id="GO:0004575">
    <property type="term" value="F:sucrose alpha-glucosidase activity"/>
    <property type="evidence" value="ECO:0007669"/>
    <property type="project" value="TreeGrafter"/>
</dbReference>
<dbReference type="GO" id="GO:0000272">
    <property type="term" value="P:polysaccharide catabolic process"/>
    <property type="evidence" value="ECO:0007669"/>
    <property type="project" value="UniProtKB-KW"/>
</dbReference>
<dbReference type="GO" id="GO:0005987">
    <property type="term" value="P:sucrose catabolic process"/>
    <property type="evidence" value="ECO:0007669"/>
    <property type="project" value="TreeGrafter"/>
</dbReference>
<dbReference type="CDD" id="cd18622">
    <property type="entry name" value="GH32_Inu-like"/>
    <property type="match status" value="1"/>
</dbReference>
<dbReference type="FunFam" id="2.60.120.560:FF:000003">
    <property type="entry name" value="Extracellular exo-inulinase inuE"/>
    <property type="match status" value="1"/>
</dbReference>
<dbReference type="FunFam" id="2.115.10.20:FF:000002">
    <property type="entry name" value="Invertase 2"/>
    <property type="match status" value="1"/>
</dbReference>
<dbReference type="Gene3D" id="2.60.120.560">
    <property type="entry name" value="Exo-inulinase, domain 1"/>
    <property type="match status" value="1"/>
</dbReference>
<dbReference type="Gene3D" id="2.115.10.20">
    <property type="entry name" value="Glycosyl hydrolase domain, family 43"/>
    <property type="match status" value="1"/>
</dbReference>
<dbReference type="InterPro" id="IPR013320">
    <property type="entry name" value="ConA-like_dom_sf"/>
</dbReference>
<dbReference type="InterPro" id="IPR001362">
    <property type="entry name" value="Glyco_hydro_32"/>
</dbReference>
<dbReference type="InterPro" id="IPR018053">
    <property type="entry name" value="Glyco_hydro_32_AS"/>
</dbReference>
<dbReference type="InterPro" id="IPR013189">
    <property type="entry name" value="Glyco_hydro_32_C"/>
</dbReference>
<dbReference type="InterPro" id="IPR013148">
    <property type="entry name" value="Glyco_hydro_32_N"/>
</dbReference>
<dbReference type="InterPro" id="IPR023296">
    <property type="entry name" value="Glyco_hydro_beta-prop_sf"/>
</dbReference>
<dbReference type="PANTHER" id="PTHR42800">
    <property type="entry name" value="EXOINULINASE INUD (AFU_ORTHOLOGUE AFUA_5G00480)"/>
    <property type="match status" value="1"/>
</dbReference>
<dbReference type="PANTHER" id="PTHR42800:SF1">
    <property type="entry name" value="EXOINULINASE INUD (AFU_ORTHOLOGUE AFUA_5G00480)"/>
    <property type="match status" value="1"/>
</dbReference>
<dbReference type="Pfam" id="PF08244">
    <property type="entry name" value="Glyco_hydro_32C"/>
    <property type="match status" value="1"/>
</dbReference>
<dbReference type="Pfam" id="PF00251">
    <property type="entry name" value="Glyco_hydro_32N"/>
    <property type="match status" value="1"/>
</dbReference>
<dbReference type="SMART" id="SM00640">
    <property type="entry name" value="Glyco_32"/>
    <property type="match status" value="1"/>
</dbReference>
<dbReference type="SUPFAM" id="SSF75005">
    <property type="entry name" value="Arabinanase/levansucrase/invertase"/>
    <property type="match status" value="1"/>
</dbReference>
<dbReference type="SUPFAM" id="SSF49899">
    <property type="entry name" value="Concanavalin A-like lectins/glucanases"/>
    <property type="match status" value="1"/>
</dbReference>
<dbReference type="PROSITE" id="PS00609">
    <property type="entry name" value="GLYCOSYL_HYDROL_F32"/>
    <property type="match status" value="1"/>
</dbReference>
<protein>
    <recommendedName>
        <fullName>Extracellular exo-inulinase inuE</fullName>
        <ecNumber>3.2.1.80</ecNumber>
    </recommendedName>
</protein>
<gene>
    <name type="primary">exoI</name>
</gene>
<proteinExistence type="evidence at protein level"/>
<organism>
    <name type="scientific">Aspergillus ficuum</name>
    <dbReference type="NCBI Taxonomy" id="5058"/>
    <lineage>
        <taxon>Eukaryota</taxon>
        <taxon>Fungi</taxon>
        <taxon>Dikarya</taxon>
        <taxon>Ascomycota</taxon>
        <taxon>Pezizomycotina</taxon>
        <taxon>Eurotiomycetes</taxon>
        <taxon>Eurotiomycetidae</taxon>
        <taxon>Eurotiales</taxon>
        <taxon>Aspergillaceae</taxon>
        <taxon>Aspergillus</taxon>
    </lineage>
</organism>
<feature type="signal peptide" evidence="1">
    <location>
        <begin position="1"/>
        <end position="19"/>
    </location>
</feature>
<feature type="chain" id="PRO_0000429404" description="Extracellular exo-inulinase inuE">
    <location>
        <begin position="20"/>
        <end position="537"/>
    </location>
</feature>
<feature type="active site" evidence="2">
    <location>
        <position position="41"/>
    </location>
</feature>
<feature type="glycosylation site" description="N-linked (GlcNAc...) asparagine" evidence="1">
    <location>
        <position position="49"/>
    </location>
</feature>
<feature type="glycosylation site" description="N-linked (GlcNAc...) asparagine" evidence="1">
    <location>
        <position position="67"/>
    </location>
</feature>
<feature type="glycosylation site" description="N-linked (GlcNAc...) asparagine" evidence="1">
    <location>
        <position position="112"/>
    </location>
</feature>
<feature type="glycosylation site" description="N-linked (GlcNAc...) asparagine" evidence="1">
    <location>
        <position position="300"/>
    </location>
</feature>
<feature type="glycosylation site" description="N-linked (GlcNAc...) asparagine" evidence="1">
    <location>
        <position position="363"/>
    </location>
</feature>
<feature type="glycosylation site" description="N-linked (GlcNAc...) asparagine" evidence="1">
    <location>
        <position position="398"/>
    </location>
</feature>
<feature type="glycosylation site" description="N-linked (GlcNAc...) asparagine" evidence="1">
    <location>
        <position position="430"/>
    </location>
</feature>
<feature type="glycosylation site" description="N-linked (GlcNAc...) asparagine" evidence="1">
    <location>
        <position position="531"/>
    </location>
</feature>
<name>INUE_ASPFI</name>
<reference key="1">
    <citation type="journal article" date="2013" name="Carbohydr. Polym.">
        <title>Expression of an exoinulinase gene from Aspergillus ficuum in Escherichia coli and its characterization.</title>
        <authorList>
            <person name="Chen X.M."/>
            <person name="Xu X.M."/>
            <person name="Jin Z.Y."/>
            <person name="Chen H.Q."/>
        </authorList>
    </citation>
    <scope>NUCLEOTIDE SEQUENCE [GENOMIC DNA]</scope>
    <scope>FUNCTION</scope>
    <scope>CATALYTIC ACTIVITY</scope>
    <scope>BIOPHYSICOCHEMICAL PROPERTIES</scope>
    <scope>ACTIVITY REGULATION</scope>
</reference>
<accession>E1ABX2</accession>
<comment type="function">
    <text evidence="3">Exo-inulinase involved in utilization of the plant storage polymer inulin, consisting of fructooligosaccharides with a degree of polymerization (DP) value from 2 to 60. Splits off terminal fructose units successively from the non-reducing end of the inulin molecule, and also hydrolyze sucrose and raffinose.</text>
</comment>
<comment type="catalytic activity">
    <reaction evidence="3">
        <text>Hydrolysis of terminal, non-reducing (2-&gt;1)- and (2-&gt;6)-linked beta-D-fructofuranose residues in fructans.</text>
        <dbReference type="EC" id="3.2.1.80"/>
    </reaction>
</comment>
<comment type="activity regulation">
    <text evidence="3">The catalytic activity is increased by manganese cathions, but strongly inhibited by other metal ions such as copper, aluminum, silver, iron, nickel, zinc and magnesium cathions.</text>
</comment>
<comment type="biophysicochemical properties">
    <kinetics>
        <KM evidence="3">7.1 mM for inulin</KM>
        <KM evidence="3">347 mM for sucrose</KM>
        <Vmax evidence="3">1.0 mmol/min/mg enzyme toward inulin</Vmax>
        <Vmax evidence="3">12.0 mmol/min/mg enzyme toward sucrose</Vmax>
    </kinetics>
    <phDependence>
        <text evidence="3">Optimum pH is 4.0 when inulin is a substrate and 5.0 when sucrose is a substrate.</text>
    </phDependence>
    <temperatureDependence>
        <text evidence="3">Optimum temperature is 60 degrees Celsius when inulin is a substrate and 55 degrees Celsius when sucrose is a substrate.</text>
    </temperatureDependence>
</comment>
<comment type="subcellular location">
    <subcellularLocation>
        <location evidence="4">Secreted</location>
    </subcellularLocation>
</comment>
<comment type="similarity">
    <text evidence="4">Belongs to the glycosyl hydrolase 32 family.</text>
</comment>
<sequence length="537" mass="59143">MARLLKAVTVCALAGIAHAFNYDQPYRGQYHFSPQKNWMNDPNGLLYHNGTYHLFFQYNPGGIEWGNISWGHATSEDLTHWEEQPVALLARGYGSDVTEMYFSGSAVADVNNTSGFGKDGKTPLVAMYTSYYPVAQTLPSGQTVQEDQQSQSIAYSLDDGLTWTTYDAANPVIPNPPQPYQAQYQNFRDPFVFWHDESHKWVVVTSIAELHKLAIYTSDNLKDWKLVSEFGPYNAQGGVWECPGLFKLPLDGGSSTKWVITSGLNPGGPPGTVGSGTQYFVGEFDGTTFTPDADTVYPGNSTANWMDWGPDFYAAAGYNGLSIKDHVHIGWMNNWQYGANIPTYPWRSAMAIPRHLALKTINNKTTLVQQPQEAWSSISSKHPLYSRTYSTFSEGSTNASTTGETFRVDLSFSATSKASTFAIALRASANFTEQTLAGYDFAKQQIFLDRTKSGDVSFDNTFASVYHGPLVPDSTGMVRLSIFVDRSSVEVFGGQGETTLTAQIFPSNDAVHARLVSTGGATEDVRVDVHNITSTWN</sequence>
<evidence type="ECO:0000255" key="1"/>
<evidence type="ECO:0000255" key="2">
    <source>
        <dbReference type="PROSITE-ProRule" id="PRU10067"/>
    </source>
</evidence>
<evidence type="ECO:0000269" key="3">
    <source>
    </source>
</evidence>
<evidence type="ECO:0000305" key="4"/>
<keyword id="KW-0119">Carbohydrate metabolism</keyword>
<keyword id="KW-0325">Glycoprotein</keyword>
<keyword id="KW-0326">Glycosidase</keyword>
<keyword id="KW-0378">Hydrolase</keyword>
<keyword id="KW-0624">Polysaccharide degradation</keyword>
<keyword id="KW-0964">Secreted</keyword>
<keyword id="KW-0732">Signal</keyword>